<sequence>MDSFLCDRYTQFPSLNYGAEDVPSQASATWELDNVTDLNRLILAWASILSRLSEEESPVIQIDGAAARIHLESGRIESVQIEKSGNSGSRTAILTSDTPITSERCQLEIRYTPHQLHGSITSRGCTSVRYLDQLARNLESLLREPLPLSIVNPTPLILPGPRLFHEMVRHTGNEPAISFLNESGEVEDLSYEMLHSLSEQLASHLVHILASLPPPGQHGKIIPVLLPQSLDLYVAWLAILKAGAAVCPLNLDTPSERLNFIVGDVDARVVVTNEGLTSAFQNIETSITIVKMEEIKTFAPGCLSSVDVCNEDLAYVMYTSGSTGLPKGVGISHQAAVQALLAHDEIIPGFRRFLQFAAPTFDVSVFEIFFPLFRGVTLVGCNRRLMLNDLPGIINQLNIDAAELTPTVCGELLQSRDAVPCLKLLLTIGEMLTRHVVDEFGSSKDRPGLLHGMYGPTEATIHCTAVSSVRAGSLVGNIGTPFKTVSAFIISMDHIVGQEPVILPVGHVGELVVGGPQLARYYLNRPTENRNAFIDSKTYGRLYRTGDKARLHPNGELQCMGRISTGQVKLRGQRIELGEIENVLLKNQYVRNVAACVIQGALVAFLSADVAHCTSRDLQLTCRRSLPKFMIPGNFVILNKLPRLPSGKIDRKGLEAEYILSKGVDQTDLAEPAGDIEQKISVSLNLLLESSLTPTASLASAGLDSLRAIHLASSLRKEGVFLNALDILEADSIRKMAALVLKSQPEVTVIPTESEPLKMWNTIIQQGHEMLKLTENLQQPTDIIPCSPIQTGMLLETKLNPKAYFNSVELQFDRGISLEDVKSAFLSTALQNEVLRSGFIEIDFPGFPYAQVVWESLHPDQIIESKIFDHNLELQNQWDILHPLRVQLCVIDGQPKALVHIHHSLYDGWSWDQIMRDLVSALENKQLTQRPQYRLFTLFHINNHSSEIREQALNYWRSHLQGSTPCLWPNFQDRSDLPKVTQVVERQFNVDIDQLDSFVRDFRISRQTIFQAAIGYLLSAYNGTSDIILGNVSAGRTLPIDGIESIVGPCISTLPLRLNLQKARTVRDLLAILHGLNRKSLVHGFVPLRDVKQVSGINTADQLFDTLFVWQDNFTTVCGPIAQVTSRDFLEFTLTTELGIQDGKIWAKATFEESILPESHVVIFLKQIESIAMTFLESADRLLEDIPFHLPESLLSMENNFPPPLKSVPGLSDSVEELAKTDSERIAVEFLDSLDPETGDRAIKTLTYSELDAQSNKLAGQLRNLGVVEGNLVAICLEKSLELYISILAVIKAGAGYVPITPQTPIMRMKHIIQQASCRICIADSEIQAELSDVPNTTAMLAKPQILVENALYEFPKAPGSCPAYAVFTSGTTGTPKGVLISRFNLESNIAVLSALYPDFPESRLLQACSHAFDVSVFEIFFAWSRGMTLCSAKNDVLFRDIELAIRKMRITHLSMTPTVAALVRANNVPLVKFLVTAGEALTPKVRMDWAGKGLWQGYGPSETTNICTVKPNICMSHFISNIGRPLPNTSVFVLAEGERFSLVPRGAVGELCFGGDQVGIGYLNMEDLTRQKFLIHEAYGRIYKSGDYGRLLPDGSIAFVGRRDDLVKIRGQRIELGEITSVLMTHENVKDCATIVCDSNNGDSGDSKQLISFWVPDNINIDGLGQHENSHIFQQLFDYIGDHLPSYMIPSFLIPISHIPMTTIGRKIDKEALKYMYLSANPTLLDVYSRGKEEEHTQENLTDNEAKVAGLVAQVTGVSTKEIGRHTSFYRLGFDSVIAIALSRELKLAGFGQIDISVIMKNDSIARLTRKISQSIEAQMPSLESIPTFDHLFSRELIRKIKDEASSHGVNVTKILPCTSLQEGMLSGISTGNDASYYNHLVFEINRNIELLKTAWMKMVARHDILRTWFRQTDDARFPFVQVVLERLDIAWQSIECPIADAPSTLEKSKLAVAVKEGPHSLYSFTVLQCVDSPKVFLLLSIHHALYDGEAMEVLLQEVQECLLEHQLPPVVPFDLYLHEMIKVNSDSTDQFWSNYLKDFTPTLFTSPSSLVKGSPKMSRSTSHIPSSSFTEVCNACKSSSVTTLSLLQAAWSRLICLLSGSPDICFGDVVNCRSIPIDGAQRIVGPCFNTLPVRTSLNGNMTNIDLMRNLQSNRAATLPYQLSSMRRIQSRFSQRGQRIFDSLLLLQGRPLQLNESLWRMVSENGVMDFPIIFEIIPHPESDSLQFIFHFDEGLVPTTDIDTITACYHAILNHTLRFPEARVMDFSLVESDGQVSGGLSVFRKLGEANGDHKSNGYGKSEEWSAESLEIRNLLSAMSKIDKKRINMDTTIFELGLDSINAIQIAGHFRKVGYEISAADILEGPSIREIASVLQGSKSSPCVGLALHNFDFDSFQSLHLPSICDKLGLLESSVEAIRPCTTPQAGMLASFINSEGLLYFNSFTLKSPTPLNLIALRFVWESVMERNEMLRTGFCEVKDDIFPFAMVTYRPGIIELPWNECLSPSKRMSDARHEQHLNGKSILNQLHRPPWFLTVKPCSDSTLMQLSAHHALYDAHSMNLILSEVINVYNGSTLPPAIPVSSVLGFIVEKFQSPESESYWSEVGPSFSATKFPDMNPLHAKVNDTRFLSRDCSFTMEKLQKGCRELGVTLQAVGQAAWSRILSSYVGESNVTYGLVLSGRDISEQAQDTAFPCLTTVPAHQNVEATNRELLQQIMKSNAMAVKYQFTSLTKIQRLSKADSPLFDTLFVFQKLASTDKQQPLWDVVEESSQTEYSVSLELIPSSDTLKLALTYQNHILPDGQASLLLDELDWLLTHILQYPDSTSSSLDTASRSIVSVLPRKDSKIDCPTQLLHEFVEVGATRHPSRVALEFAERINGKLITQSWTYKDLDEQGNRYANLLHHLGVKQGTLVGVSFQKCPEAYFSILGVLKVGCAFLAIDPSAPIARKQFILDDSKADILMCGMEQQDELKSLTGIRLVPVNEEGLLDGVNSTPPTLSFPLHGDATCYCLYTSGSTGTPKGCEITHDNAVQAMLSFQRLFGGHWDESSRWFQFASFHFDVSVLEQYWTWSVGICLTSCPRDTLFEDFAGTLRDLSITHIDLTPSLAQLIQPEDVPSLCRGVFITGGEKLKQEILEQWGPHEVIYNGYGPTEVTIGCTMLPRVTSSDKPTNIGPQFDNVSGYVFKQGTNTPVLRGGIGELCVSGPLVGKGYLNRPQLTAEKFQYIETYGERVYRTGDLVRMMHDESFCFLGRIDDQVKLRGQRLEINEINHVIKNSTEEVGDVVTMVLKHPTATKEQIVSFTTVVTSASTAACPEVDFSPEAGRVLEAIRSECRSHLPGYMIPTHIIPLTRFPLSSNNKIDNGQLRGIFASMLLSEMQALSSHEQESPTEDTDTIRKIIPILSRFTKVEEKTISSSSNIFELGLDSILVISFSRALREAGCPAAHPSVVMKCSTLSLLAKAVESPDNNVEGERRQYEDAKQKIAAFAHMHMSHLANELEVAPQDIEAITPCTSLQDGMLYQCLRNESHPYLTSFTFQLAPHTDIPMLKEAWKRAQVSFQLLRTKFPLTDDGYALVVLKEAALPWFEFAISKDDELESTAESYFKEWNLGFNNFMGRVWEIGIISSPKRRWMCLNIFHGLYDGISLPIILDAVKHVYNGGQMPRSMPFTEVLPLGPLRTVPAAKSFWAKHLENLSQTTIPRRSLPEPGSRTSTIRIEGFHCIEETRRSLNVTEKAMFHACWVYTFERYFNYIPTMGIVVSGRSFDSEDADVAVGPLFNTIPCNIPKFSFSTFSELIQACHDYSVSALPFQHTPLRSIMKWIGRSSQRPLFDVLFVFQKQENITSQSGESLWEPVASFTEADYPLALEVQSQGSGSFQVTAACQGDILTSDGISDLLEQFRLSLRSLVEEPFSNLSFSGNSTSLEASSKQIANKVIGGPSPNVTTSFQWSQAASLLRQEIAKLANLDVSEINEDSSVLEVGLDSIDAIKLSSRLKRDHIDLSVGNIMRNRTIRTMMAEVTVNGSATKADLTYLKSLESQLRRSLEEDGKDLGDIEHIYPATPLQEGMINEMLSSDGLHYFNHDILQISEDVDVTMLKNAWETIAKRHPILRTSFATVSDPNLPFSYAQLIHKSSIKIDWDIVDIAENSIESILQEERARALSLVMSKPLFNLRLIRDGAKLLLILSLPHAMYDGWSLTLLHQDVASAYSGQFSARPSYQHVLEDIISSSRDEGLQFWKGVLSDAEPSIFPPQPGAGDQGALVHRDETASDIPLSHVLNFCKAHGVTAQALGLTCWTIVLASYLGQLDVLFGTVMLGRDTEEASKVAFPTMNTVAVRGILHGSVSEMLEYVQRNLGNMLAHQHYPLRKIKSMMGVGNKDLFDTLFIYQKSPSSQEGQDKPLYKSINSSSSVEYSICVELEAIDDSAVWRVACKDTILGKKDTSQLVLQLLQVFKTIIQSPEIPTAGFVEVRERPTLDSVTQNGGSLPDGPGGIAIEPVVWSLLEERIRDTLSLVAAVPKEEITRNTTIFHFGIDSISAIKVSSLLRRQSVLISVRDILRAETVGKMAEIVNSAREKKPTTATSREKLLSLQTLKNSNIDLQLRKYGMKREDVEVFLPATAGQVYMLETWKNSHGKLFFPDFFYRVTGRITQSQLDNAWKVMTAKLPILRTTILSIGDTGMPYVLAELKQVSNPIIWRSDLRVKSNRRHVAARQGSGLVYLYASQTETETLLMLHIHHALYDAVALQHLINILESLFQDVSTPVNTPVDIAEFIQYGKAMSSEAQQEAFWKGYLGNDITPVAKKGSGPVMDVQAGAGKYQPGLLDNTDWLNKICQAEGLSVQAVFLAAYSKVHVREFHVRGADLTVGVYLANRSHDLVGLPELVAPTLNIVPLRIQDPGSRSVFELARIIQSDLHEIGSAENCTVSLAQIAEWTGIRLDTTVNFIKLPEVAAQVSTATSGAPQLVQVTEEEVLEWLSKESCNSNGSEQVDAAAKGSSSKLWLEEMLGIESGVGLENAGDVYKVSPPGSQLSQDSPEKQEANNKPSPQPSVDIEAAVRNNTLDVGVFGPSSDKALGVLDGVRRELLALQTSSAR</sequence>
<comment type="function">
    <text evidence="5">Nonribosomal peptide synthetase; part of the siderophore biosynthetic pathway (PubMed:26960149). Arthroderma benhamiae produces 2 types of extracellular siderophores, ferrichrome C and ferricrocin (PubMed:26960149). The biosynthesis of these siderophores depends on the hydroxylation of ornithine to N(5)-hydroxyornithine, catalyzed by the monooxygenase sidA (PubMed:26960149). The structure of ferricrocin differs from ferrichrome C only by a serine for alanine substitution and the assembly of both siderophores is suggested to be performed by the nonribosomal peptide synthase (NRPS) sidC (PubMed:26960149).</text>
</comment>
<comment type="pathway">
    <text evidence="8">Siderophore biosynthesis.</text>
</comment>
<comment type="induction">
    <text evidence="5">Expression is under the control of the iron acquisition regulator hapX (PubMed:26960149).</text>
</comment>
<comment type="domain">
    <text evidence="1 2">NRP synthetases are composed of discrete domains (adenylation (A), thiolation (T) or peptidyl carrier protein (PCP) and condensation (C) domains) which when grouped together are referred to as a single module (By similarity). Each module is responsible for the recognition (via the A domain) and incorporation of a single amino acid into the growing peptide product (By similarity). Thus, an NRP synthetase is generally composed of one or more modules and can terminate in a thioesterase domain (TE) that releases the newly synthesized peptide from the enzyme (By similarity). Occasionally, methyltransferase domains (responsible for amino acid methylation) are present within the NRP synthetase (By similarity). SidC has the following architecture: A-T-C-A-T-C-T-C-A-T-C-T-C-T-C.</text>
</comment>
<comment type="similarity">
    <text evidence="7">Belongs to the NRP synthetase family.</text>
</comment>
<feature type="chain" id="PRO_0000444379" description="Nonribosomal peptide synthetase sidC">
    <location>
        <begin position="1"/>
        <end position="5087"/>
    </location>
</feature>
<feature type="domain" description="Carrier 1" evidence="3">
    <location>
        <begin position="671"/>
        <end position="744"/>
    </location>
</feature>
<feature type="domain" description="Carrier 2" evidence="3">
    <location>
        <begin position="1740"/>
        <end position="1817"/>
    </location>
</feature>
<feature type="domain" description="Carrier 3" evidence="3">
    <location>
        <begin position="2302"/>
        <end position="2378"/>
    </location>
</feature>
<feature type="domain" description="Carrier 4" evidence="3">
    <location>
        <begin position="3387"/>
        <end position="3464"/>
    </location>
</feature>
<feature type="domain" description="Carrier 5" evidence="3">
    <location>
        <begin position="3943"/>
        <end position="4019"/>
    </location>
</feature>
<feature type="domain" description="Carrier 6" evidence="3">
    <location>
        <begin position="4496"/>
        <end position="4569"/>
    </location>
</feature>
<feature type="region of interest" description="Adenylation 1" evidence="2">
    <location>
        <begin position="165"/>
        <end position="563"/>
    </location>
</feature>
<feature type="region of interest" description="Condensation 1" evidence="2">
    <location>
        <begin position="782"/>
        <end position="1112"/>
    </location>
</feature>
<feature type="region of interest" description="Adenylation 2" evidence="2">
    <location>
        <begin position="1217"/>
        <end position="1611"/>
    </location>
</feature>
<feature type="region of interest" description="Condensation 2" evidence="2">
    <location>
        <begin position="1855"/>
        <end position="2272"/>
    </location>
</feature>
<feature type="region of interest" description="Condensation 3" evidence="2">
    <location>
        <begin position="2419"/>
        <end position="2831"/>
    </location>
</feature>
<feature type="region of interest" description="Adenylation 3" evidence="2">
    <location>
        <begin position="2860"/>
        <end position="3258"/>
    </location>
</feature>
<feature type="region of interest" description="Condensation 4" evidence="2">
    <location>
        <begin position="3506"/>
        <end position="3910"/>
    </location>
</feature>
<feature type="region of interest" description="Condensation 5" evidence="2">
    <location>
        <begin position="4051"/>
        <end position="4416"/>
    </location>
</feature>
<feature type="region of interest" description="Condensation 6" evidence="2">
    <location>
        <begin position="4610"/>
        <end position="4913"/>
    </location>
</feature>
<feature type="region of interest" description="Disordered" evidence="4">
    <location>
        <begin position="5013"/>
        <end position="5048"/>
    </location>
</feature>
<feature type="modified residue" description="O-(pantetheine 4'-phosphoryl)serine" evidence="3">
    <location>
        <position position="705"/>
    </location>
</feature>
<feature type="modified residue" description="O-(pantetheine 4'-phosphoryl)serine" evidence="3">
    <location>
        <position position="1777"/>
    </location>
</feature>
<feature type="modified residue" description="O-(pantetheine 4'-phosphoryl)serine" evidence="3">
    <location>
        <position position="2339"/>
    </location>
</feature>
<feature type="modified residue" description="O-(pantetheine 4'-phosphoryl)serine" evidence="3">
    <location>
        <position position="3424"/>
    </location>
</feature>
<feature type="modified residue" description="O-(pantetheine 4'-phosphoryl)serine" evidence="3">
    <location>
        <position position="3980"/>
    </location>
</feature>
<feature type="modified residue" description="O-(pantetheine 4'-phosphoryl)serine" evidence="3">
    <location>
        <position position="4530"/>
    </location>
</feature>
<accession>D4AU56</accession>
<proteinExistence type="evidence at transcript level"/>
<dbReference type="EC" id="6.3.2.-" evidence="8"/>
<dbReference type="EMBL" id="ABSU01000010">
    <property type="protein sequence ID" value="EFE33326.1"/>
    <property type="molecule type" value="Genomic_DNA"/>
</dbReference>
<dbReference type="RefSeq" id="XP_003013966.1">
    <property type="nucleotide sequence ID" value="XM_003013920.1"/>
</dbReference>
<dbReference type="SMR" id="D4AU56"/>
<dbReference type="STRING" id="663331.D4AU56"/>
<dbReference type="GeneID" id="9521384"/>
<dbReference type="KEGG" id="abe:ARB_07686"/>
<dbReference type="eggNOG" id="KOG1178">
    <property type="taxonomic scope" value="Eukaryota"/>
</dbReference>
<dbReference type="HOGENOM" id="CLU_000092_2_0_1"/>
<dbReference type="OMA" id="CTMLPRM"/>
<dbReference type="Proteomes" id="UP000008866">
    <property type="component" value="Unassembled WGS sequence"/>
</dbReference>
<dbReference type="GO" id="GO:0005737">
    <property type="term" value="C:cytoplasm"/>
    <property type="evidence" value="ECO:0007669"/>
    <property type="project" value="TreeGrafter"/>
</dbReference>
<dbReference type="GO" id="GO:0016874">
    <property type="term" value="F:ligase activity"/>
    <property type="evidence" value="ECO:0007669"/>
    <property type="project" value="UniProtKB-KW"/>
</dbReference>
<dbReference type="GO" id="GO:0031177">
    <property type="term" value="F:phosphopantetheine binding"/>
    <property type="evidence" value="ECO:0007669"/>
    <property type="project" value="InterPro"/>
</dbReference>
<dbReference type="GO" id="GO:0043041">
    <property type="term" value="P:amino acid activation for nonribosomal peptide biosynthetic process"/>
    <property type="evidence" value="ECO:0007669"/>
    <property type="project" value="TreeGrafter"/>
</dbReference>
<dbReference type="GO" id="GO:0044550">
    <property type="term" value="P:secondary metabolite biosynthetic process"/>
    <property type="evidence" value="ECO:0007669"/>
    <property type="project" value="TreeGrafter"/>
</dbReference>
<dbReference type="CDD" id="cd05918">
    <property type="entry name" value="A_NRPS_SidN3_like"/>
    <property type="match status" value="2"/>
</dbReference>
<dbReference type="CDD" id="cd19542">
    <property type="entry name" value="CT_NRPS-like"/>
    <property type="match status" value="2"/>
</dbReference>
<dbReference type="FunFam" id="3.30.300.30:FF:000015">
    <property type="entry name" value="Nonribosomal peptide synthase SidD"/>
    <property type="match status" value="1"/>
</dbReference>
<dbReference type="FunFam" id="3.30.300.30:FF:000033">
    <property type="entry name" value="Nonribosomal siderophore peptide synthase SidC"/>
    <property type="match status" value="1"/>
</dbReference>
<dbReference type="FunFam" id="3.40.50.12780:FF:000024">
    <property type="entry name" value="Nonribosomal siderophore peptide synthase SidC"/>
    <property type="match status" value="2"/>
</dbReference>
<dbReference type="Gene3D" id="3.30.300.30">
    <property type="match status" value="3"/>
</dbReference>
<dbReference type="Gene3D" id="1.10.1200.10">
    <property type="entry name" value="ACP-like"/>
    <property type="match status" value="6"/>
</dbReference>
<dbReference type="Gene3D" id="3.30.559.10">
    <property type="entry name" value="Chloramphenicol acetyltransferase-like domain"/>
    <property type="match status" value="6"/>
</dbReference>
<dbReference type="Gene3D" id="3.40.50.12780">
    <property type="entry name" value="N-terminal domain of ligase-like"/>
    <property type="match status" value="3"/>
</dbReference>
<dbReference type="Gene3D" id="3.30.559.30">
    <property type="entry name" value="Nonribosomal peptide synthetase, condensation domain"/>
    <property type="match status" value="6"/>
</dbReference>
<dbReference type="InterPro" id="IPR010071">
    <property type="entry name" value="AA_adenyl_dom"/>
</dbReference>
<dbReference type="InterPro" id="IPR036736">
    <property type="entry name" value="ACP-like_sf"/>
</dbReference>
<dbReference type="InterPro" id="IPR045851">
    <property type="entry name" value="AMP-bd_C_sf"/>
</dbReference>
<dbReference type="InterPro" id="IPR020845">
    <property type="entry name" value="AMP-binding_CS"/>
</dbReference>
<dbReference type="InterPro" id="IPR000873">
    <property type="entry name" value="AMP-dep_synth/lig_dom"/>
</dbReference>
<dbReference type="InterPro" id="IPR042099">
    <property type="entry name" value="ANL_N_sf"/>
</dbReference>
<dbReference type="InterPro" id="IPR023213">
    <property type="entry name" value="CAT-like_dom_sf"/>
</dbReference>
<dbReference type="InterPro" id="IPR001242">
    <property type="entry name" value="Condensatn"/>
</dbReference>
<dbReference type="InterPro" id="IPR020806">
    <property type="entry name" value="PKS_PP-bd"/>
</dbReference>
<dbReference type="InterPro" id="IPR009081">
    <property type="entry name" value="PP-bd_ACP"/>
</dbReference>
<dbReference type="InterPro" id="IPR006162">
    <property type="entry name" value="Ppantetheine_attach_site"/>
</dbReference>
<dbReference type="NCBIfam" id="TIGR01733">
    <property type="entry name" value="AA-adenyl-dom"/>
    <property type="match status" value="2"/>
</dbReference>
<dbReference type="NCBIfam" id="NF003417">
    <property type="entry name" value="PRK04813.1"/>
    <property type="match status" value="3"/>
</dbReference>
<dbReference type="PANTHER" id="PTHR45527:SF2">
    <property type="entry name" value="FERRICROCIN SYNTHETASE (NONRIBOSOMAL PEPTIDE SIDEROPHORE SYNTHASE ) (EUROFUNG)"/>
    <property type="match status" value="1"/>
</dbReference>
<dbReference type="PANTHER" id="PTHR45527">
    <property type="entry name" value="NONRIBOSOMAL PEPTIDE SYNTHETASE"/>
    <property type="match status" value="1"/>
</dbReference>
<dbReference type="Pfam" id="PF00501">
    <property type="entry name" value="AMP-binding"/>
    <property type="match status" value="3"/>
</dbReference>
<dbReference type="Pfam" id="PF00668">
    <property type="entry name" value="Condensation"/>
    <property type="match status" value="6"/>
</dbReference>
<dbReference type="Pfam" id="PF00550">
    <property type="entry name" value="PP-binding"/>
    <property type="match status" value="6"/>
</dbReference>
<dbReference type="SMART" id="SM00823">
    <property type="entry name" value="PKS_PP"/>
    <property type="match status" value="5"/>
</dbReference>
<dbReference type="SUPFAM" id="SSF56801">
    <property type="entry name" value="Acetyl-CoA synthetase-like"/>
    <property type="match status" value="3"/>
</dbReference>
<dbReference type="SUPFAM" id="SSF47336">
    <property type="entry name" value="ACP-like"/>
    <property type="match status" value="6"/>
</dbReference>
<dbReference type="SUPFAM" id="SSF52777">
    <property type="entry name" value="CoA-dependent acyltransferases"/>
    <property type="match status" value="12"/>
</dbReference>
<dbReference type="PROSITE" id="PS00455">
    <property type="entry name" value="AMP_BINDING"/>
    <property type="match status" value="1"/>
</dbReference>
<dbReference type="PROSITE" id="PS50075">
    <property type="entry name" value="CARRIER"/>
    <property type="match status" value="6"/>
</dbReference>
<dbReference type="PROSITE" id="PS00012">
    <property type="entry name" value="PHOSPHOPANTETHEINE"/>
    <property type="match status" value="5"/>
</dbReference>
<evidence type="ECO:0000250" key="1">
    <source>
        <dbReference type="UniProtKB" id="A0A144KPJ6"/>
    </source>
</evidence>
<evidence type="ECO:0000255" key="2"/>
<evidence type="ECO:0000255" key="3">
    <source>
        <dbReference type="PROSITE-ProRule" id="PRU00258"/>
    </source>
</evidence>
<evidence type="ECO:0000256" key="4">
    <source>
        <dbReference type="SAM" id="MobiDB-lite"/>
    </source>
</evidence>
<evidence type="ECO:0000269" key="5">
    <source>
    </source>
</evidence>
<evidence type="ECO:0000303" key="6">
    <source>
    </source>
</evidence>
<evidence type="ECO:0000305" key="7"/>
<evidence type="ECO:0000305" key="8">
    <source>
    </source>
</evidence>
<gene>
    <name evidence="6" type="primary">sidC</name>
    <name type="ORF">ARB_07686</name>
</gene>
<keyword id="KW-0436">Ligase</keyword>
<keyword id="KW-0596">Phosphopantetheine</keyword>
<keyword id="KW-0597">Phosphoprotein</keyword>
<keyword id="KW-1185">Reference proteome</keyword>
<keyword id="KW-0677">Repeat</keyword>
<name>SIDC_ARTBC</name>
<reference key="1">
    <citation type="journal article" date="2011" name="Genome Biol.">
        <title>Comparative and functional genomics provide insights into the pathogenicity of dermatophytic fungi.</title>
        <authorList>
            <person name="Burmester A."/>
            <person name="Shelest E."/>
            <person name="Gloeckner G."/>
            <person name="Heddergott C."/>
            <person name="Schindler S."/>
            <person name="Staib P."/>
            <person name="Heidel A."/>
            <person name="Felder M."/>
            <person name="Petzold A."/>
            <person name="Szafranski K."/>
            <person name="Feuermann M."/>
            <person name="Pedruzzi I."/>
            <person name="Priebe S."/>
            <person name="Groth M."/>
            <person name="Winkler R."/>
            <person name="Li W."/>
            <person name="Kniemeyer O."/>
            <person name="Schroeckh V."/>
            <person name="Hertweck C."/>
            <person name="Hube B."/>
            <person name="White T.C."/>
            <person name="Platzer M."/>
            <person name="Guthke R."/>
            <person name="Heitman J."/>
            <person name="Woestemeyer J."/>
            <person name="Zipfel P.F."/>
            <person name="Monod M."/>
            <person name="Brakhage A.A."/>
        </authorList>
    </citation>
    <scope>NUCLEOTIDE SEQUENCE [LARGE SCALE GENOMIC DNA]</scope>
    <source>
        <strain>ATCC MYA-4681 / CBS 112371</strain>
    </source>
</reference>
<reference key="2">
    <citation type="journal article" date="2016" name="PLoS ONE">
        <title>HapX mediates iron homeostasis in the pathogenic dermatophyte Arthroderma benhamiae but is dispensable for virulence.</title>
        <authorList>
            <person name="Kroeber A."/>
            <person name="Scherlach K."/>
            <person name="Hortschansky P."/>
            <person name="Shelest E."/>
            <person name="Staib P."/>
            <person name="Kniemeyer O."/>
            <person name="Brakhage A.A."/>
        </authorList>
    </citation>
    <scope>FUNCTION</scope>
    <scope>INDUCTION</scope>
</reference>
<organism>
    <name type="scientific">Arthroderma benhamiae (strain ATCC MYA-4681 / CBS 112371)</name>
    <name type="common">Trichophyton mentagrophytes</name>
    <dbReference type="NCBI Taxonomy" id="663331"/>
    <lineage>
        <taxon>Eukaryota</taxon>
        <taxon>Fungi</taxon>
        <taxon>Dikarya</taxon>
        <taxon>Ascomycota</taxon>
        <taxon>Pezizomycotina</taxon>
        <taxon>Eurotiomycetes</taxon>
        <taxon>Eurotiomycetidae</taxon>
        <taxon>Onygenales</taxon>
        <taxon>Arthrodermataceae</taxon>
        <taxon>Trichophyton</taxon>
    </lineage>
</organism>
<protein>
    <recommendedName>
        <fullName evidence="6">Nonribosomal peptide synthetase sidC</fullName>
        <shortName evidence="6">NPRS sidC</shortName>
        <ecNumber evidence="8">6.3.2.-</ecNumber>
    </recommendedName>
    <alternativeName>
        <fullName evidence="6">Siderophore peptide synthetase C</fullName>
    </alternativeName>
</protein>